<name>RL4_METCA</name>
<feature type="chain" id="PRO_0000242394" description="Large ribosomal subunit protein uL4">
    <location>
        <begin position="1"/>
        <end position="205"/>
    </location>
</feature>
<feature type="region of interest" description="Disordered" evidence="2">
    <location>
        <begin position="48"/>
        <end position="79"/>
    </location>
</feature>
<evidence type="ECO:0000255" key="1">
    <source>
        <dbReference type="HAMAP-Rule" id="MF_01328"/>
    </source>
</evidence>
<evidence type="ECO:0000256" key="2">
    <source>
        <dbReference type="SAM" id="MobiDB-lite"/>
    </source>
</evidence>
<evidence type="ECO:0000305" key="3"/>
<proteinExistence type="inferred from homology"/>
<keyword id="KW-1185">Reference proteome</keyword>
<keyword id="KW-0687">Ribonucleoprotein</keyword>
<keyword id="KW-0689">Ribosomal protein</keyword>
<keyword id="KW-0694">RNA-binding</keyword>
<keyword id="KW-0699">rRNA-binding</keyword>
<gene>
    <name evidence="1" type="primary">rplD</name>
    <name type="ordered locus">MCA2371</name>
</gene>
<reference key="1">
    <citation type="journal article" date="2004" name="PLoS Biol.">
        <title>Genomic insights into methanotrophy: the complete genome sequence of Methylococcus capsulatus (Bath).</title>
        <authorList>
            <person name="Ward N.L."/>
            <person name="Larsen O."/>
            <person name="Sakwa J."/>
            <person name="Bruseth L."/>
            <person name="Khouri H.M."/>
            <person name="Durkin A.S."/>
            <person name="Dimitrov G."/>
            <person name="Jiang L."/>
            <person name="Scanlan D."/>
            <person name="Kang K.H."/>
            <person name="Lewis M.R."/>
            <person name="Nelson K.E."/>
            <person name="Methe B.A."/>
            <person name="Wu M."/>
            <person name="Heidelberg J.F."/>
            <person name="Paulsen I.T."/>
            <person name="Fouts D.E."/>
            <person name="Ravel J."/>
            <person name="Tettelin H."/>
            <person name="Ren Q."/>
            <person name="Read T.D."/>
            <person name="DeBoy R.T."/>
            <person name="Seshadri R."/>
            <person name="Salzberg S.L."/>
            <person name="Jensen H.B."/>
            <person name="Birkeland N.K."/>
            <person name="Nelson W.C."/>
            <person name="Dodson R.J."/>
            <person name="Grindhaug S.H."/>
            <person name="Holt I.E."/>
            <person name="Eidhammer I."/>
            <person name="Jonasen I."/>
            <person name="Vanaken S."/>
            <person name="Utterback T.R."/>
            <person name="Feldblyum T.V."/>
            <person name="Fraser C.M."/>
            <person name="Lillehaug J.R."/>
            <person name="Eisen J.A."/>
        </authorList>
    </citation>
    <scope>NUCLEOTIDE SEQUENCE [LARGE SCALE GENOMIC DNA]</scope>
    <source>
        <strain>ATCC 33009 / NCIMB 11132 / Bath</strain>
    </source>
</reference>
<sequence length="205" mass="22089">MSLSIPKIENGAAGDLEVSDKVFGQGFNESLVHQLVVGYLAAARSGTKAQKSRSDVSGGGKKPWKQKGSGHARAGTTRSPLWRTGGVTFAASNRNYRQKLNKKMYRAAVRSIFSELLRQGRLVVSDGIVPTSPKTRELAAKLKSFGEGYTVILAEQLDLNLALSSRNLPNVSINTADTLSPVDLVHAERVIATSSAIRKLEVRLS</sequence>
<dbReference type="EMBL" id="AE017282">
    <property type="protein sequence ID" value="AAU91601.1"/>
    <property type="molecule type" value="Genomic_DNA"/>
</dbReference>
<dbReference type="RefSeq" id="WP_010961599.1">
    <property type="nucleotide sequence ID" value="NC_002977.6"/>
</dbReference>
<dbReference type="SMR" id="Q605B3"/>
<dbReference type="STRING" id="243233.MCA2371"/>
<dbReference type="GeneID" id="88224573"/>
<dbReference type="KEGG" id="mca:MCA2371"/>
<dbReference type="eggNOG" id="COG0088">
    <property type="taxonomic scope" value="Bacteria"/>
</dbReference>
<dbReference type="HOGENOM" id="CLU_041575_5_2_6"/>
<dbReference type="Proteomes" id="UP000006821">
    <property type="component" value="Chromosome"/>
</dbReference>
<dbReference type="GO" id="GO:1990904">
    <property type="term" value="C:ribonucleoprotein complex"/>
    <property type="evidence" value="ECO:0007669"/>
    <property type="project" value="UniProtKB-KW"/>
</dbReference>
<dbReference type="GO" id="GO:0005840">
    <property type="term" value="C:ribosome"/>
    <property type="evidence" value="ECO:0007669"/>
    <property type="project" value="UniProtKB-KW"/>
</dbReference>
<dbReference type="GO" id="GO:0019843">
    <property type="term" value="F:rRNA binding"/>
    <property type="evidence" value="ECO:0007669"/>
    <property type="project" value="UniProtKB-UniRule"/>
</dbReference>
<dbReference type="GO" id="GO:0003735">
    <property type="term" value="F:structural constituent of ribosome"/>
    <property type="evidence" value="ECO:0007669"/>
    <property type="project" value="InterPro"/>
</dbReference>
<dbReference type="GO" id="GO:0006412">
    <property type="term" value="P:translation"/>
    <property type="evidence" value="ECO:0007669"/>
    <property type="project" value="UniProtKB-UniRule"/>
</dbReference>
<dbReference type="Gene3D" id="3.40.1370.10">
    <property type="match status" value="1"/>
</dbReference>
<dbReference type="HAMAP" id="MF_01328_B">
    <property type="entry name" value="Ribosomal_uL4_B"/>
    <property type="match status" value="1"/>
</dbReference>
<dbReference type="InterPro" id="IPR002136">
    <property type="entry name" value="Ribosomal_uL4"/>
</dbReference>
<dbReference type="InterPro" id="IPR013005">
    <property type="entry name" value="Ribosomal_uL4-like"/>
</dbReference>
<dbReference type="InterPro" id="IPR023574">
    <property type="entry name" value="Ribosomal_uL4_dom_sf"/>
</dbReference>
<dbReference type="NCBIfam" id="TIGR03953">
    <property type="entry name" value="rplD_bact"/>
    <property type="match status" value="1"/>
</dbReference>
<dbReference type="PANTHER" id="PTHR10746">
    <property type="entry name" value="50S RIBOSOMAL PROTEIN L4"/>
    <property type="match status" value="1"/>
</dbReference>
<dbReference type="PANTHER" id="PTHR10746:SF6">
    <property type="entry name" value="LARGE RIBOSOMAL SUBUNIT PROTEIN UL4M"/>
    <property type="match status" value="1"/>
</dbReference>
<dbReference type="Pfam" id="PF00573">
    <property type="entry name" value="Ribosomal_L4"/>
    <property type="match status" value="1"/>
</dbReference>
<dbReference type="SUPFAM" id="SSF52166">
    <property type="entry name" value="Ribosomal protein L4"/>
    <property type="match status" value="1"/>
</dbReference>
<comment type="function">
    <text evidence="1">One of the primary rRNA binding proteins, this protein initially binds near the 5'-end of the 23S rRNA. It is important during the early stages of 50S assembly. It makes multiple contacts with different domains of the 23S rRNA in the assembled 50S subunit and ribosome.</text>
</comment>
<comment type="function">
    <text evidence="1">Forms part of the polypeptide exit tunnel.</text>
</comment>
<comment type="subunit">
    <text evidence="1">Part of the 50S ribosomal subunit.</text>
</comment>
<comment type="similarity">
    <text evidence="1">Belongs to the universal ribosomal protein uL4 family.</text>
</comment>
<accession>Q605B3</accession>
<organism>
    <name type="scientific">Methylococcus capsulatus (strain ATCC 33009 / NCIMB 11132 / Bath)</name>
    <dbReference type="NCBI Taxonomy" id="243233"/>
    <lineage>
        <taxon>Bacteria</taxon>
        <taxon>Pseudomonadati</taxon>
        <taxon>Pseudomonadota</taxon>
        <taxon>Gammaproteobacteria</taxon>
        <taxon>Methylococcales</taxon>
        <taxon>Methylococcaceae</taxon>
        <taxon>Methylococcus</taxon>
    </lineage>
</organism>
<protein>
    <recommendedName>
        <fullName evidence="1">Large ribosomal subunit protein uL4</fullName>
    </recommendedName>
    <alternativeName>
        <fullName evidence="3">50S ribosomal protein L4</fullName>
    </alternativeName>
</protein>